<proteinExistence type="inferred from homology"/>
<feature type="chain" id="PRO_1000080823" description="Transcriptional repressor NrdR">
    <location>
        <begin position="1"/>
        <end position="149"/>
    </location>
</feature>
<feature type="domain" description="ATP-cone" evidence="1">
    <location>
        <begin position="49"/>
        <end position="139"/>
    </location>
</feature>
<feature type="zinc finger region" evidence="1">
    <location>
        <begin position="3"/>
        <end position="34"/>
    </location>
</feature>
<protein>
    <recommendedName>
        <fullName evidence="1">Transcriptional repressor NrdR</fullName>
    </recommendedName>
</protein>
<gene>
    <name evidence="1" type="primary">nrdR</name>
    <name type="ordered locus">Shew185_3160</name>
</gene>
<evidence type="ECO:0000255" key="1">
    <source>
        <dbReference type="HAMAP-Rule" id="MF_00440"/>
    </source>
</evidence>
<dbReference type="EMBL" id="CP000753">
    <property type="protein sequence ID" value="ABS09290.1"/>
    <property type="molecule type" value="Genomic_DNA"/>
</dbReference>
<dbReference type="RefSeq" id="WP_006082643.1">
    <property type="nucleotide sequence ID" value="NC_009665.1"/>
</dbReference>
<dbReference type="SMR" id="A6WR51"/>
<dbReference type="GeneID" id="11773354"/>
<dbReference type="KEGG" id="sbm:Shew185_3160"/>
<dbReference type="HOGENOM" id="CLU_108412_0_0_6"/>
<dbReference type="GO" id="GO:0005524">
    <property type="term" value="F:ATP binding"/>
    <property type="evidence" value="ECO:0007669"/>
    <property type="project" value="UniProtKB-KW"/>
</dbReference>
<dbReference type="GO" id="GO:0003677">
    <property type="term" value="F:DNA binding"/>
    <property type="evidence" value="ECO:0007669"/>
    <property type="project" value="UniProtKB-KW"/>
</dbReference>
<dbReference type="GO" id="GO:0008270">
    <property type="term" value="F:zinc ion binding"/>
    <property type="evidence" value="ECO:0007669"/>
    <property type="project" value="UniProtKB-UniRule"/>
</dbReference>
<dbReference type="GO" id="GO:0045892">
    <property type="term" value="P:negative regulation of DNA-templated transcription"/>
    <property type="evidence" value="ECO:0007669"/>
    <property type="project" value="UniProtKB-UniRule"/>
</dbReference>
<dbReference type="HAMAP" id="MF_00440">
    <property type="entry name" value="NrdR"/>
    <property type="match status" value="1"/>
</dbReference>
<dbReference type="InterPro" id="IPR005144">
    <property type="entry name" value="ATP-cone_dom"/>
</dbReference>
<dbReference type="InterPro" id="IPR055173">
    <property type="entry name" value="NrdR-like_N"/>
</dbReference>
<dbReference type="InterPro" id="IPR003796">
    <property type="entry name" value="RNR_NrdR-like"/>
</dbReference>
<dbReference type="NCBIfam" id="TIGR00244">
    <property type="entry name" value="transcriptional regulator NrdR"/>
    <property type="match status" value="1"/>
</dbReference>
<dbReference type="PANTHER" id="PTHR30455">
    <property type="entry name" value="TRANSCRIPTIONAL REPRESSOR NRDR"/>
    <property type="match status" value="1"/>
</dbReference>
<dbReference type="PANTHER" id="PTHR30455:SF2">
    <property type="entry name" value="TRANSCRIPTIONAL REPRESSOR NRDR"/>
    <property type="match status" value="1"/>
</dbReference>
<dbReference type="Pfam" id="PF03477">
    <property type="entry name" value="ATP-cone"/>
    <property type="match status" value="1"/>
</dbReference>
<dbReference type="Pfam" id="PF22811">
    <property type="entry name" value="Zn_ribbon_NrdR"/>
    <property type="match status" value="1"/>
</dbReference>
<dbReference type="PROSITE" id="PS51161">
    <property type="entry name" value="ATP_CONE"/>
    <property type="match status" value="1"/>
</dbReference>
<organism>
    <name type="scientific">Shewanella baltica (strain OS185)</name>
    <dbReference type="NCBI Taxonomy" id="402882"/>
    <lineage>
        <taxon>Bacteria</taxon>
        <taxon>Pseudomonadati</taxon>
        <taxon>Pseudomonadota</taxon>
        <taxon>Gammaproteobacteria</taxon>
        <taxon>Alteromonadales</taxon>
        <taxon>Shewanellaceae</taxon>
        <taxon>Shewanella</taxon>
    </lineage>
</organism>
<name>NRDR_SHEB8</name>
<comment type="function">
    <text evidence="1">Negatively regulates transcription of bacterial ribonucleotide reductase nrd genes and operons by binding to NrdR-boxes.</text>
</comment>
<comment type="cofactor">
    <cofactor evidence="1">
        <name>Zn(2+)</name>
        <dbReference type="ChEBI" id="CHEBI:29105"/>
    </cofactor>
    <text evidence="1">Binds 1 zinc ion.</text>
</comment>
<comment type="similarity">
    <text evidence="1">Belongs to the NrdR family.</text>
</comment>
<keyword id="KW-0067">ATP-binding</keyword>
<keyword id="KW-0238">DNA-binding</keyword>
<keyword id="KW-0479">Metal-binding</keyword>
<keyword id="KW-0547">Nucleotide-binding</keyword>
<keyword id="KW-0678">Repressor</keyword>
<keyword id="KW-0804">Transcription</keyword>
<keyword id="KW-0805">Transcription regulation</keyword>
<keyword id="KW-0862">Zinc</keyword>
<keyword id="KW-0863">Zinc-finger</keyword>
<sequence length="149" mass="17060">MHCPFCSATDTKVIDSRLVAEGHQVRRRRECTECHERFTTFEGAELVMPRVIKRDGSRQPFDEEKLQGGMLRAVEKRPVSMDEIEQALSKIKSTLRATGEREVPSEMVGNLMMEQLMSLDKVAYIRFASVYRAFEDVSEFGEAIAKLQK</sequence>
<reference key="1">
    <citation type="submission" date="2007-07" db="EMBL/GenBank/DDBJ databases">
        <title>Complete sequence of chromosome of Shewanella baltica OS185.</title>
        <authorList>
            <consortium name="US DOE Joint Genome Institute"/>
            <person name="Copeland A."/>
            <person name="Lucas S."/>
            <person name="Lapidus A."/>
            <person name="Barry K."/>
            <person name="Glavina del Rio T."/>
            <person name="Dalin E."/>
            <person name="Tice H."/>
            <person name="Pitluck S."/>
            <person name="Sims D."/>
            <person name="Brettin T."/>
            <person name="Bruce D."/>
            <person name="Detter J.C."/>
            <person name="Han C."/>
            <person name="Schmutz J."/>
            <person name="Larimer F."/>
            <person name="Land M."/>
            <person name="Hauser L."/>
            <person name="Kyrpides N."/>
            <person name="Mikhailova N."/>
            <person name="Brettar I."/>
            <person name="Rodrigues J."/>
            <person name="Konstantinidis K."/>
            <person name="Tiedje J."/>
            <person name="Richardson P."/>
        </authorList>
    </citation>
    <scope>NUCLEOTIDE SEQUENCE [LARGE SCALE GENOMIC DNA]</scope>
    <source>
        <strain>OS185</strain>
    </source>
</reference>
<accession>A6WR51</accession>